<name>NOX_RHOER</name>
<dbReference type="EC" id="1.8.1.20" evidence="2 3"/>
<dbReference type="EMBL" id="KT600797">
    <property type="protein sequence ID" value="ALG03744.1"/>
    <property type="molecule type" value="Genomic_DNA"/>
</dbReference>
<dbReference type="EMBL" id="LYPG01000026">
    <property type="protein sequence ID" value="OFV78834.1"/>
    <property type="molecule type" value="Genomic_DNA"/>
</dbReference>
<dbReference type="RefSeq" id="WP_029256809.1">
    <property type="nucleotide sequence ID" value="NZ_LYPG01000026.1"/>
</dbReference>
<dbReference type="SMR" id="A0A0N9HP11"/>
<dbReference type="GeneID" id="57484126"/>
<dbReference type="PATRIC" id="fig|1833.90.peg.423"/>
<dbReference type="BioCyc" id="MetaCyc:MONOMER-20252"/>
<dbReference type="GO" id="GO:0010181">
    <property type="term" value="F:FMN binding"/>
    <property type="evidence" value="ECO:0007669"/>
    <property type="project" value="InterPro"/>
</dbReference>
<dbReference type="GO" id="GO:0016491">
    <property type="term" value="F:oxidoreductase activity"/>
    <property type="evidence" value="ECO:0007669"/>
    <property type="project" value="UniProtKB-KW"/>
</dbReference>
<dbReference type="CDD" id="cd02803">
    <property type="entry name" value="OYE_like_FMN_family"/>
    <property type="match status" value="1"/>
</dbReference>
<dbReference type="Gene3D" id="3.20.20.70">
    <property type="entry name" value="Aldolase class I"/>
    <property type="match status" value="1"/>
</dbReference>
<dbReference type="InterPro" id="IPR013785">
    <property type="entry name" value="Aldolase_TIM"/>
</dbReference>
<dbReference type="InterPro" id="IPR051799">
    <property type="entry name" value="NADH_flavin_oxidoreductase"/>
</dbReference>
<dbReference type="InterPro" id="IPR001155">
    <property type="entry name" value="OxRdtase_FMN_N"/>
</dbReference>
<dbReference type="PANTHER" id="PTHR43656">
    <property type="entry name" value="BINDING OXIDOREDUCTASE, PUTATIVE (AFU_ORTHOLOGUE AFUA_2G08260)-RELATED"/>
    <property type="match status" value="1"/>
</dbReference>
<dbReference type="PANTHER" id="PTHR43656:SF2">
    <property type="entry name" value="BINDING OXIDOREDUCTASE, PUTATIVE (AFU_ORTHOLOGUE AFUA_2G08260)-RELATED"/>
    <property type="match status" value="1"/>
</dbReference>
<dbReference type="Pfam" id="PF00724">
    <property type="entry name" value="Oxidored_FMN"/>
    <property type="match status" value="1"/>
</dbReference>
<dbReference type="SUPFAM" id="SSF51395">
    <property type="entry name" value="FMN-linked oxidoreductases"/>
    <property type="match status" value="1"/>
</dbReference>
<comment type="function">
    <text evidence="2 3">Involved in the degradation of the organic disulfide 4,4'-dithiodibutyric acid (DTDB). Catalyzes the initial cleavage of DTDB into 2 molecules of 4-mercaptobutyric acid (4MB) (PubMed:26407888, PubMed:27564089). Low activities are observed with other disulfide compounds, such as 3,3'-dithiodipropionic acid DTDP, 3,3'-thiodipropionic acid TDP and DTNB (PubMed:27564089).</text>
</comment>
<comment type="catalytic activity">
    <reaction evidence="2 3">
        <text>2 4-sulfanylbutanoate + NAD(+) = 4,4'-disulfanyldibutanoate + NADH + H(+)</text>
        <dbReference type="Rhea" id="RHEA:54804"/>
        <dbReference type="ChEBI" id="CHEBI:15378"/>
        <dbReference type="ChEBI" id="CHEBI:57540"/>
        <dbReference type="ChEBI" id="CHEBI:57945"/>
        <dbReference type="ChEBI" id="CHEBI:138358"/>
        <dbReference type="ChEBI" id="CHEBI:138359"/>
        <dbReference type="EC" id="1.8.1.20"/>
    </reaction>
</comment>
<comment type="cofactor">
    <cofactor evidence="3">
        <name>FMN</name>
        <dbReference type="ChEBI" id="CHEBI:58210"/>
    </cofactor>
</comment>
<comment type="activity regulation">
    <text evidence="3">Inactivated by cobalt, nickel and zinc ions.</text>
</comment>
<comment type="biophysicochemical properties">
    <kinetics>
        <KM evidence="3">0.6 mM for DTDB</KM>
        <Vmax evidence="3">3.36 umol/min/mg enzyme</Vmax>
        <text evidence="3">kcat is 2.5 sec(-1).</text>
    </kinetics>
    <phDependence>
        <text evidence="3">Optimum pH is 8.0.</text>
    </phDependence>
    <temperatureDependence>
        <text evidence="3">Optimum temperature is 45 degrees Celsius.</text>
    </temperatureDependence>
</comment>
<comment type="disruption phenotype">
    <text evidence="2">Disruption of the gene results in a complete loss of DTDB degradation. Mutant cannot grow with DTDB as the sole carbon source.</text>
</comment>
<comment type="similarity">
    <text evidence="6">Belongs to the NADH:flavin oxidoreductase/NADH oxidase family.</text>
</comment>
<evidence type="ECO:0000250" key="1">
    <source>
        <dbReference type="UniProtKB" id="P42593"/>
    </source>
</evidence>
<evidence type="ECO:0000269" key="2">
    <source>
    </source>
</evidence>
<evidence type="ECO:0000269" key="3">
    <source>
    </source>
</evidence>
<evidence type="ECO:0000303" key="4">
    <source>
    </source>
</evidence>
<evidence type="ECO:0000303" key="5">
    <source>
    </source>
</evidence>
<evidence type="ECO:0000305" key="6"/>
<evidence type="ECO:0000312" key="7">
    <source>
        <dbReference type="EMBL" id="OFV78834.1"/>
    </source>
</evidence>
<reference key="1">
    <citation type="journal article" date="2015" name="Appl. Environ. Microbiol.">
        <title>Biodegradation of the organic disulfide 4,4'-dithiodibutyric acid by Rhodococcus spp.</title>
        <authorList>
            <person name="Khairy H."/>
            <person name="Wubbeler J.H."/>
            <person name="Steinbuchel A."/>
        </authorList>
    </citation>
    <scope>NUCLEOTIDE SEQUENCE [GENOMIC DNA]</scope>
    <scope>FUNCTION</scope>
    <scope>CATALYTIC ACTIVITY</scope>
    <scope>DISRUPTION PHENOTYPE</scope>
    <source>
        <strain>MI2</strain>
    </source>
</reference>
<reference key="2">
    <citation type="journal article" date="2016" name="PLoS ONE">
        <title>Genome and proteome analysis of Rhodococcus erythropolis MI2: elucidation of the 4,4-dithiodibutyric acid catabolism.</title>
        <authorList>
            <person name="Khairy H."/>
            <person name="Meinert C."/>
            <person name="Wuebbeler J.H."/>
            <person name="Poehlein A."/>
            <person name="Daniel R."/>
            <person name="Voigt B."/>
            <person name="Riedel K."/>
            <person name="Steinbuechel A."/>
        </authorList>
    </citation>
    <scope>NUCLEOTIDE SEQUENCE [LARGE SCALE GENOMIC DNA]</scope>
    <source>
        <strain>MI2</strain>
    </source>
</reference>
<reference key="3">
    <citation type="journal article" date="2016" name="Lett. Appl. Microbiol.">
        <title>The NADH:flavin oxidoreductase Nox from Rhodococcus erythropolis MI2 is the key enzyme of 4,4'-dithiodibutyric acid degradation.</title>
        <authorList>
            <person name="Khairy H."/>
            <person name="Wuebbeler J.H."/>
            <person name="Steinbuechel A."/>
        </authorList>
    </citation>
    <scope>FUNCTION</scope>
    <scope>CATALYTIC ACTIVITY</scope>
    <scope>COFACTOR</scope>
    <scope>ACTIVITY REGULATION</scope>
    <scope>BIOPHYSICOCHEMICAL PROPERTIES</scope>
    <source>
        <strain>MI2</strain>
    </source>
</reference>
<accession>A0A0N9HP11</accession>
<keyword id="KW-0285">Flavoprotein</keyword>
<keyword id="KW-0288">FMN</keyword>
<keyword id="KW-0520">NAD</keyword>
<keyword id="KW-0560">Oxidoreductase</keyword>
<gene>
    <name evidence="4" type="primary">nox</name>
    <name evidence="7" type="ORF">RERY_03780</name>
</gene>
<proteinExistence type="evidence at protein level"/>
<protein>
    <recommendedName>
        <fullName evidence="6">4,4'-dithiodibutanoate disulfide reductase</fullName>
        <ecNumber evidence="2 3">1.8.1.20</ecNumber>
    </recommendedName>
    <alternativeName>
        <fullName evidence="4 5">NADH:flavin oxidoreductase Nox</fullName>
    </alternativeName>
</protein>
<sequence>MTTAPTPSIFEPARLGPLTLRNRIVKAATFEGVMPRGAVSDDLINFHAEVARGGAAMTTVAYCAVSPGGRVHRDTLVMDERALPGLRRLTDAVHAEGALAAAQIGHAGLVANTLSNKTKTLAPSTRLSPPAMGLVKGATLAELDGVVSDFERTARVAVDAGFDAIEVHLGHNYLLSSFMSPNLNKRHDRYGGSVAKRAEYPRRVIEAVRVAAGSSVAVTAKFNMSDGVPKGLWLDQSLPIAQILEADGHLDAMQLTGGSSLLNGMYFFRGEVPLAEFVASQPKLVGYGLKFYGPKIFPTYPFEEGFFLPFARQFRQALRMPLILLGGINRVDTIEHALDEGFEFVAMARALLRDPQLVNKFQAESVDQGLCIHCNKCMPTIYTGTRCVVRDALVVREAPRLGQ</sequence>
<feature type="chain" id="PRO_0000450518" description="4,4'-dithiodibutanoate disulfide reductase">
    <location>
        <begin position="1"/>
        <end position="403"/>
    </location>
</feature>
<feature type="active site" description="Proton donor" evidence="1">
    <location>
        <position position="173"/>
    </location>
</feature>
<feature type="binding site" evidence="1">
    <location>
        <position position="103"/>
    </location>
    <ligand>
        <name>FMN</name>
        <dbReference type="ChEBI" id="CHEBI:58210"/>
    </ligand>
</feature>
<feature type="binding site" evidence="1">
    <location>
        <begin position="348"/>
        <end position="349"/>
    </location>
    <ligand>
        <name>FMN</name>
        <dbReference type="ChEBI" id="CHEBI:58210"/>
    </ligand>
</feature>
<organism>
    <name type="scientific">Rhodococcus erythropolis</name>
    <name type="common">Arthrobacter picolinophilus</name>
    <dbReference type="NCBI Taxonomy" id="1833"/>
    <lineage>
        <taxon>Bacteria</taxon>
        <taxon>Bacillati</taxon>
        <taxon>Actinomycetota</taxon>
        <taxon>Actinomycetes</taxon>
        <taxon>Mycobacteriales</taxon>
        <taxon>Nocardiaceae</taxon>
        <taxon>Rhodococcus</taxon>
        <taxon>Rhodococcus erythropolis group</taxon>
    </lineage>
</organism>